<accession>Q81Y06</accession>
<accession>Q6HVA3</accession>
<accession>Q6KPH3</accession>
<gene>
    <name evidence="1" type="primary">lexA</name>
    <name type="ordered locus">BA_3754</name>
    <name type="ordered locus">GBAA_3754</name>
    <name type="ordered locus">BAS3479</name>
</gene>
<comment type="function">
    <text evidence="1">Represses a number of genes involved in the response to DNA damage (SOS response), including recA and lexA. In the presence of single-stranded DNA, RecA interacts with LexA causing an autocatalytic cleavage which disrupts the DNA-binding part of LexA, leading to derepression of the SOS regulon and eventually DNA repair.</text>
</comment>
<comment type="catalytic activity">
    <reaction evidence="1">
        <text>Hydrolysis of Ala-|-Gly bond in repressor LexA.</text>
        <dbReference type="EC" id="3.4.21.88"/>
    </reaction>
</comment>
<comment type="subunit">
    <text evidence="1">Homodimer.</text>
</comment>
<comment type="similarity">
    <text evidence="1">Belongs to the peptidase S24 family.</text>
</comment>
<comment type="sequence caution" evidence="2">
    <conflict type="erroneous initiation">
        <sequence resource="EMBL-CDS" id="AAT55785"/>
    </conflict>
</comment>
<proteinExistence type="inferred from homology"/>
<dbReference type="EC" id="3.4.21.88" evidence="1"/>
<dbReference type="EMBL" id="AE016879">
    <property type="protein sequence ID" value="AAP27500.1"/>
    <property type="molecule type" value="Genomic_DNA"/>
</dbReference>
<dbReference type="EMBL" id="AE017334">
    <property type="protein sequence ID" value="AAT32868.1"/>
    <property type="molecule type" value="Genomic_DNA"/>
</dbReference>
<dbReference type="EMBL" id="AE017225">
    <property type="protein sequence ID" value="AAT55785.1"/>
    <property type="status" value="ALT_INIT"/>
    <property type="molecule type" value="Genomic_DNA"/>
</dbReference>
<dbReference type="RefSeq" id="NP_846014.1">
    <property type="nucleotide sequence ID" value="NC_003997.3"/>
</dbReference>
<dbReference type="RefSeq" id="WP_000413738.1">
    <property type="nucleotide sequence ID" value="NZ_WXXJ01000029.1"/>
</dbReference>
<dbReference type="SMR" id="Q81Y06"/>
<dbReference type="STRING" id="261594.GBAA_3754"/>
<dbReference type="MEROPS" id="S24.001"/>
<dbReference type="DNASU" id="1087206"/>
<dbReference type="GeneID" id="93007490"/>
<dbReference type="KEGG" id="ban:BA_3754"/>
<dbReference type="KEGG" id="bar:GBAA_3754"/>
<dbReference type="KEGG" id="bat:BAS3479"/>
<dbReference type="PATRIC" id="fig|198094.11.peg.3725"/>
<dbReference type="eggNOG" id="COG1974">
    <property type="taxonomic scope" value="Bacteria"/>
</dbReference>
<dbReference type="HOGENOM" id="CLU_066192_45_1_9"/>
<dbReference type="OMA" id="HVWLLPH"/>
<dbReference type="OrthoDB" id="9802364at2"/>
<dbReference type="Proteomes" id="UP000000427">
    <property type="component" value="Chromosome"/>
</dbReference>
<dbReference type="Proteomes" id="UP000000594">
    <property type="component" value="Chromosome"/>
</dbReference>
<dbReference type="GO" id="GO:0003677">
    <property type="term" value="F:DNA binding"/>
    <property type="evidence" value="ECO:0007669"/>
    <property type="project" value="UniProtKB-UniRule"/>
</dbReference>
<dbReference type="GO" id="GO:0004252">
    <property type="term" value="F:serine-type endopeptidase activity"/>
    <property type="evidence" value="ECO:0007669"/>
    <property type="project" value="UniProtKB-UniRule"/>
</dbReference>
<dbReference type="GO" id="GO:0006281">
    <property type="term" value="P:DNA repair"/>
    <property type="evidence" value="ECO:0007669"/>
    <property type="project" value="UniProtKB-UniRule"/>
</dbReference>
<dbReference type="GO" id="GO:0006260">
    <property type="term" value="P:DNA replication"/>
    <property type="evidence" value="ECO:0007669"/>
    <property type="project" value="UniProtKB-UniRule"/>
</dbReference>
<dbReference type="GO" id="GO:0045892">
    <property type="term" value="P:negative regulation of DNA-templated transcription"/>
    <property type="evidence" value="ECO:0007669"/>
    <property type="project" value="UniProtKB-UniRule"/>
</dbReference>
<dbReference type="GO" id="GO:0006508">
    <property type="term" value="P:proteolysis"/>
    <property type="evidence" value="ECO:0007669"/>
    <property type="project" value="InterPro"/>
</dbReference>
<dbReference type="GO" id="GO:0009432">
    <property type="term" value="P:SOS response"/>
    <property type="evidence" value="ECO:0007669"/>
    <property type="project" value="UniProtKB-UniRule"/>
</dbReference>
<dbReference type="CDD" id="cd00090">
    <property type="entry name" value="HTH_ARSR"/>
    <property type="match status" value="1"/>
</dbReference>
<dbReference type="CDD" id="cd06529">
    <property type="entry name" value="S24_LexA-like"/>
    <property type="match status" value="1"/>
</dbReference>
<dbReference type="FunFam" id="1.10.10.10:FF:000009">
    <property type="entry name" value="LexA repressor"/>
    <property type="match status" value="1"/>
</dbReference>
<dbReference type="FunFam" id="2.10.109.10:FF:000001">
    <property type="entry name" value="LexA repressor"/>
    <property type="match status" value="1"/>
</dbReference>
<dbReference type="Gene3D" id="2.10.109.10">
    <property type="entry name" value="Umud Fragment, subunit A"/>
    <property type="match status" value="1"/>
</dbReference>
<dbReference type="Gene3D" id="1.10.10.10">
    <property type="entry name" value="Winged helix-like DNA-binding domain superfamily/Winged helix DNA-binding domain"/>
    <property type="match status" value="1"/>
</dbReference>
<dbReference type="HAMAP" id="MF_00015">
    <property type="entry name" value="LexA"/>
    <property type="match status" value="1"/>
</dbReference>
<dbReference type="InterPro" id="IPR011991">
    <property type="entry name" value="ArsR-like_HTH"/>
</dbReference>
<dbReference type="InterPro" id="IPR006200">
    <property type="entry name" value="LexA"/>
</dbReference>
<dbReference type="InterPro" id="IPR039418">
    <property type="entry name" value="LexA-like"/>
</dbReference>
<dbReference type="InterPro" id="IPR036286">
    <property type="entry name" value="LexA/Signal_pep-like_sf"/>
</dbReference>
<dbReference type="InterPro" id="IPR006199">
    <property type="entry name" value="LexA_DNA-bd_dom"/>
</dbReference>
<dbReference type="InterPro" id="IPR050077">
    <property type="entry name" value="LexA_repressor"/>
</dbReference>
<dbReference type="InterPro" id="IPR006197">
    <property type="entry name" value="Peptidase_S24_LexA"/>
</dbReference>
<dbReference type="InterPro" id="IPR015927">
    <property type="entry name" value="Peptidase_S24_S26A/B/C"/>
</dbReference>
<dbReference type="InterPro" id="IPR036388">
    <property type="entry name" value="WH-like_DNA-bd_sf"/>
</dbReference>
<dbReference type="InterPro" id="IPR036390">
    <property type="entry name" value="WH_DNA-bd_sf"/>
</dbReference>
<dbReference type="NCBIfam" id="TIGR00498">
    <property type="entry name" value="lexA"/>
    <property type="match status" value="1"/>
</dbReference>
<dbReference type="PANTHER" id="PTHR33516">
    <property type="entry name" value="LEXA REPRESSOR"/>
    <property type="match status" value="1"/>
</dbReference>
<dbReference type="PANTHER" id="PTHR33516:SF2">
    <property type="entry name" value="LEXA REPRESSOR-RELATED"/>
    <property type="match status" value="1"/>
</dbReference>
<dbReference type="Pfam" id="PF01726">
    <property type="entry name" value="LexA_DNA_bind"/>
    <property type="match status" value="1"/>
</dbReference>
<dbReference type="Pfam" id="PF00717">
    <property type="entry name" value="Peptidase_S24"/>
    <property type="match status" value="1"/>
</dbReference>
<dbReference type="PRINTS" id="PR00726">
    <property type="entry name" value="LEXASERPTASE"/>
</dbReference>
<dbReference type="SUPFAM" id="SSF51306">
    <property type="entry name" value="LexA/Signal peptidase"/>
    <property type="match status" value="1"/>
</dbReference>
<dbReference type="SUPFAM" id="SSF46785">
    <property type="entry name" value="Winged helix' DNA-binding domain"/>
    <property type="match status" value="1"/>
</dbReference>
<protein>
    <recommendedName>
        <fullName evidence="1">LexA repressor</fullName>
        <ecNumber evidence="1">3.4.21.88</ecNumber>
    </recommendedName>
</protein>
<reference key="1">
    <citation type="journal article" date="2003" name="Nature">
        <title>The genome sequence of Bacillus anthracis Ames and comparison to closely related bacteria.</title>
        <authorList>
            <person name="Read T.D."/>
            <person name="Peterson S.N."/>
            <person name="Tourasse N.J."/>
            <person name="Baillie L.W."/>
            <person name="Paulsen I.T."/>
            <person name="Nelson K.E."/>
            <person name="Tettelin H."/>
            <person name="Fouts D.E."/>
            <person name="Eisen J.A."/>
            <person name="Gill S.R."/>
            <person name="Holtzapple E.K."/>
            <person name="Okstad O.A."/>
            <person name="Helgason E."/>
            <person name="Rilstone J."/>
            <person name="Wu M."/>
            <person name="Kolonay J.F."/>
            <person name="Beanan M.J."/>
            <person name="Dodson R.J."/>
            <person name="Brinkac L.M."/>
            <person name="Gwinn M.L."/>
            <person name="DeBoy R.T."/>
            <person name="Madpu R."/>
            <person name="Daugherty S.C."/>
            <person name="Durkin A.S."/>
            <person name="Haft D.H."/>
            <person name="Nelson W.C."/>
            <person name="Peterson J.D."/>
            <person name="Pop M."/>
            <person name="Khouri H.M."/>
            <person name="Radune D."/>
            <person name="Benton J.L."/>
            <person name="Mahamoud Y."/>
            <person name="Jiang L."/>
            <person name="Hance I.R."/>
            <person name="Weidman J.F."/>
            <person name="Berry K.J."/>
            <person name="Plaut R.D."/>
            <person name="Wolf A.M."/>
            <person name="Watkins K.L."/>
            <person name="Nierman W.C."/>
            <person name="Hazen A."/>
            <person name="Cline R.T."/>
            <person name="Redmond C."/>
            <person name="Thwaite J.E."/>
            <person name="White O."/>
            <person name="Salzberg S.L."/>
            <person name="Thomason B."/>
            <person name="Friedlander A.M."/>
            <person name="Koehler T.M."/>
            <person name="Hanna P.C."/>
            <person name="Kolstoe A.-B."/>
            <person name="Fraser C.M."/>
        </authorList>
    </citation>
    <scope>NUCLEOTIDE SEQUENCE [LARGE SCALE GENOMIC DNA]</scope>
    <source>
        <strain>Ames / isolate Porton</strain>
    </source>
</reference>
<reference key="2">
    <citation type="journal article" date="2009" name="J. Bacteriol.">
        <title>The complete genome sequence of Bacillus anthracis Ames 'Ancestor'.</title>
        <authorList>
            <person name="Ravel J."/>
            <person name="Jiang L."/>
            <person name="Stanley S.T."/>
            <person name="Wilson M.R."/>
            <person name="Decker R.S."/>
            <person name="Read T.D."/>
            <person name="Worsham P."/>
            <person name="Keim P.S."/>
            <person name="Salzberg S.L."/>
            <person name="Fraser-Liggett C.M."/>
            <person name="Rasko D.A."/>
        </authorList>
    </citation>
    <scope>NUCLEOTIDE SEQUENCE [LARGE SCALE GENOMIC DNA]</scope>
    <source>
        <strain>Ames ancestor</strain>
    </source>
</reference>
<reference key="3">
    <citation type="submission" date="2004-01" db="EMBL/GenBank/DDBJ databases">
        <title>Complete genome sequence of Bacillus anthracis Sterne.</title>
        <authorList>
            <person name="Brettin T.S."/>
            <person name="Bruce D."/>
            <person name="Challacombe J.F."/>
            <person name="Gilna P."/>
            <person name="Han C."/>
            <person name="Hill K."/>
            <person name="Hitchcock P."/>
            <person name="Jackson P."/>
            <person name="Keim P."/>
            <person name="Longmire J."/>
            <person name="Lucas S."/>
            <person name="Okinaka R."/>
            <person name="Richardson P."/>
            <person name="Rubin E."/>
            <person name="Tice H."/>
        </authorList>
    </citation>
    <scope>NUCLEOTIDE SEQUENCE [LARGE SCALE GENOMIC DNA]</scope>
    <source>
        <strain>Sterne</strain>
    </source>
</reference>
<name>LEXA_BACAN</name>
<organism>
    <name type="scientific">Bacillus anthracis</name>
    <dbReference type="NCBI Taxonomy" id="1392"/>
    <lineage>
        <taxon>Bacteria</taxon>
        <taxon>Bacillati</taxon>
        <taxon>Bacillota</taxon>
        <taxon>Bacilli</taxon>
        <taxon>Bacillales</taxon>
        <taxon>Bacillaceae</taxon>
        <taxon>Bacillus</taxon>
        <taxon>Bacillus cereus group</taxon>
    </lineage>
</organism>
<feature type="chain" id="PRO_0000170002" description="LexA repressor">
    <location>
        <begin position="1"/>
        <end position="206"/>
    </location>
</feature>
<feature type="DNA-binding region" description="H-T-H motif" evidence="1">
    <location>
        <begin position="28"/>
        <end position="48"/>
    </location>
</feature>
<feature type="active site" description="For autocatalytic cleavage activity" evidence="1">
    <location>
        <position position="128"/>
    </location>
</feature>
<feature type="active site" description="For autocatalytic cleavage activity" evidence="1">
    <location>
        <position position="166"/>
    </location>
</feature>
<feature type="site" description="Cleavage; by autolysis" evidence="1">
    <location>
        <begin position="92"/>
        <end position="93"/>
    </location>
</feature>
<evidence type="ECO:0000255" key="1">
    <source>
        <dbReference type="HAMAP-Rule" id="MF_00015"/>
    </source>
</evidence>
<evidence type="ECO:0000305" key="2"/>
<sequence length="206" mass="22890">MEKLTKRQQDILDFIKLKVQEKGYPPSVREIGQAVGLASSSTVHGHLSRLEEKGYIRRDPTKPRAIEILGEDRMDTETQSVIQVPIVGKVTAGLPITAVESVEEHFPLPASIVAGADQVFMLRISGDSMIEAGIFDGDLVVVRQQQSAYNGEIVVALTEDNEATVKRFYKEKDHFRLQPENSSLEPIILKQVSVIGKVIGVYRDLH</sequence>
<keyword id="KW-0068">Autocatalytic cleavage</keyword>
<keyword id="KW-0227">DNA damage</keyword>
<keyword id="KW-0234">DNA repair</keyword>
<keyword id="KW-0235">DNA replication</keyword>
<keyword id="KW-0238">DNA-binding</keyword>
<keyword id="KW-0378">Hydrolase</keyword>
<keyword id="KW-1185">Reference proteome</keyword>
<keyword id="KW-0678">Repressor</keyword>
<keyword id="KW-0742">SOS response</keyword>
<keyword id="KW-0804">Transcription</keyword>
<keyword id="KW-0805">Transcription regulation</keyword>